<feature type="chain" id="PRO_0000048664" description="Sex-determining region Y protein">
    <location>
        <begin position="1"/>
        <end position="220"/>
    </location>
</feature>
<feature type="DNA-binding region" description="HMG box" evidence="3">
    <location>
        <begin position="54"/>
        <end position="122"/>
    </location>
</feature>
<feature type="region of interest" description="Disordered" evidence="4">
    <location>
        <begin position="193"/>
        <end position="220"/>
    </location>
</feature>
<evidence type="ECO:0000250" key="1">
    <source>
        <dbReference type="UniProtKB" id="P36394"/>
    </source>
</evidence>
<evidence type="ECO:0000250" key="2">
    <source>
        <dbReference type="UniProtKB" id="Q05066"/>
    </source>
</evidence>
<evidence type="ECO:0000255" key="3">
    <source>
        <dbReference type="PROSITE-ProRule" id="PRU00267"/>
    </source>
</evidence>
<evidence type="ECO:0000256" key="4">
    <source>
        <dbReference type="SAM" id="MobiDB-lite"/>
    </source>
</evidence>
<evidence type="ECO:0000305" key="5"/>
<keyword id="KW-0010">Activator</keyword>
<keyword id="KW-0112">Calmodulin-binding</keyword>
<keyword id="KW-0963">Cytoplasm</keyword>
<keyword id="KW-0221">Differentiation</keyword>
<keyword id="KW-0238">DNA-binding</keyword>
<keyword id="KW-0539">Nucleus</keyword>
<keyword id="KW-0726">Sexual differentiation</keyword>
<keyword id="KW-0804">Transcription</keyword>
<keyword id="KW-0805">Transcription regulation</keyword>
<organism>
    <name type="scientific">Eumetopias jubatus</name>
    <name type="common">Steller sea lion</name>
    <name type="synonym">Phoca jubata</name>
    <dbReference type="NCBI Taxonomy" id="34886"/>
    <lineage>
        <taxon>Eukaryota</taxon>
        <taxon>Metazoa</taxon>
        <taxon>Chordata</taxon>
        <taxon>Craniata</taxon>
        <taxon>Vertebrata</taxon>
        <taxon>Euteleostomi</taxon>
        <taxon>Mammalia</taxon>
        <taxon>Eutheria</taxon>
        <taxon>Laurasiatheria</taxon>
        <taxon>Carnivora</taxon>
        <taxon>Caniformia</taxon>
        <taxon>Pinnipedia</taxon>
        <taxon>Otariidae</taxon>
        <taxon>Eumetopias</taxon>
    </lineage>
</organism>
<comment type="function">
    <text evidence="1 2">Transcriptional regulator that controls a genetic switch in male development. It is necessary and sufficient for initiating male sex determination by directing the development of supporting cell precursors (pre-Sertoli cells) as Sertoli rather than granulosa cells. Involved in different aspects of gene regulation including promoter activation or repression. Binds to the DNA consensus sequence 5'-[AT]AACAA[AT]-3'. SRY HMG box recognizes DNA by partial intercalation in the minor groove and promotes DNA bending. Also involved in pre-mRNA splicing (By similarity). In male adult brain involved in the maintenance of motor functions of dopaminergic neurons (By similarity).</text>
</comment>
<comment type="subunit">
    <text evidence="2">Interacts with CALM, EP300, HDAC3, KPNB1, ZNF208 isoform KRAB-O, PARP1, SLC9A3R2 and WT1. The interaction with EP300 modulates its DNA-binding activity. The interaction with KPNB1 is sensitive to dissociation by Ran in the GTP-bound form. Interaction with PARP1 impaired its DNA-binding activity.</text>
</comment>
<comment type="subcellular location">
    <subcellularLocation>
        <location evidence="2">Nucleus speckle</location>
    </subcellularLocation>
    <subcellularLocation>
        <location evidence="2">Cytoplasm</location>
    </subcellularLocation>
    <subcellularLocation>
        <location evidence="2">Nucleus</location>
    </subcellularLocation>
</comment>
<comment type="similarity">
    <text evidence="5">Belongs to the SRY family.</text>
</comment>
<comment type="online information" name="Protein Spotlight">
    <link uri="https://www.proteinspotlight.org/back_issues/080"/>
    <text>The tenuous nature of sex - Issue 80 of March 2007</text>
</comment>
<sequence length="220" mass="25585">MFGVLNSDDRRAAIQQPNILAFGRTSSDLWTSNPTSNYWCETRGNGRDSGQNRVRRPMNAFMVWSRDQRRKVALENPQMQNSEISKQLGYQWKMLTEAEKWPFFEEAQRLQAVHREKYPDYKYRPRRKALPQKSDKLLPAASSSLLCRQVLVDKWYPFTYRDSCSRATHSHMEDQLSSSQPVNIANSLLQQEHHYSSTSLRGSPETLATHLSADPPFYPK</sequence>
<reference key="1">
    <citation type="submission" date="2003-09" db="EMBL/GenBank/DDBJ databases">
        <title>A phylogeny of the pinnipeds from mitochondrial and single copy nuclear gene sequences.</title>
        <authorList>
            <person name="Kinnear M.W."/>
            <person name="Walker G."/>
            <person name="Amos W."/>
        </authorList>
    </citation>
    <scope>NUCLEOTIDE SEQUENCE [GENOMIC DNA]</scope>
</reference>
<dbReference type="EMBL" id="AY424649">
    <property type="protein sequence ID" value="AAR10360.1"/>
    <property type="molecule type" value="Genomic_DNA"/>
</dbReference>
<dbReference type="SMR" id="Q6TC46"/>
<dbReference type="GO" id="GO:0005737">
    <property type="term" value="C:cytoplasm"/>
    <property type="evidence" value="ECO:0007669"/>
    <property type="project" value="UniProtKB-SubCell"/>
</dbReference>
<dbReference type="GO" id="GO:0016607">
    <property type="term" value="C:nuclear speck"/>
    <property type="evidence" value="ECO:0007669"/>
    <property type="project" value="UniProtKB-SubCell"/>
</dbReference>
<dbReference type="GO" id="GO:0005634">
    <property type="term" value="C:nucleus"/>
    <property type="evidence" value="ECO:0000250"/>
    <property type="project" value="UniProtKB"/>
</dbReference>
<dbReference type="GO" id="GO:0005516">
    <property type="term" value="F:calmodulin binding"/>
    <property type="evidence" value="ECO:0007669"/>
    <property type="project" value="UniProtKB-KW"/>
</dbReference>
<dbReference type="GO" id="GO:0001228">
    <property type="term" value="F:DNA-binding transcription activator activity, RNA polymerase II-specific"/>
    <property type="evidence" value="ECO:0007669"/>
    <property type="project" value="TreeGrafter"/>
</dbReference>
<dbReference type="GO" id="GO:0000978">
    <property type="term" value="F:RNA polymerase II cis-regulatory region sequence-specific DNA binding"/>
    <property type="evidence" value="ECO:0007669"/>
    <property type="project" value="TreeGrafter"/>
</dbReference>
<dbReference type="GO" id="GO:0030154">
    <property type="term" value="P:cell differentiation"/>
    <property type="evidence" value="ECO:0007669"/>
    <property type="project" value="UniProtKB-KW"/>
</dbReference>
<dbReference type="GO" id="GO:0030238">
    <property type="term" value="P:male sex determination"/>
    <property type="evidence" value="ECO:0007669"/>
    <property type="project" value="InterPro"/>
</dbReference>
<dbReference type="GO" id="GO:0007548">
    <property type="term" value="P:sex differentiation"/>
    <property type="evidence" value="ECO:0007669"/>
    <property type="project" value="UniProtKB-KW"/>
</dbReference>
<dbReference type="CDD" id="cd22034">
    <property type="entry name" value="HMG-box_SoxA_SRY"/>
    <property type="match status" value="1"/>
</dbReference>
<dbReference type="FunFam" id="1.10.30.10:FF:000002">
    <property type="entry name" value="transcription factor Sox-2"/>
    <property type="match status" value="1"/>
</dbReference>
<dbReference type="Gene3D" id="1.10.30.10">
    <property type="entry name" value="High mobility group box domain"/>
    <property type="match status" value="1"/>
</dbReference>
<dbReference type="InterPro" id="IPR009071">
    <property type="entry name" value="HMG_box_dom"/>
</dbReference>
<dbReference type="InterPro" id="IPR036910">
    <property type="entry name" value="HMG_box_dom_sf"/>
</dbReference>
<dbReference type="InterPro" id="IPR017253">
    <property type="entry name" value="SRY"/>
</dbReference>
<dbReference type="InterPro" id="IPR050140">
    <property type="entry name" value="SRY-related_HMG-box_TF-like"/>
</dbReference>
<dbReference type="PANTHER" id="PTHR10270:SF161">
    <property type="entry name" value="SEX-DETERMINING REGION Y PROTEIN"/>
    <property type="match status" value="1"/>
</dbReference>
<dbReference type="PANTHER" id="PTHR10270">
    <property type="entry name" value="SOX TRANSCRIPTION FACTOR"/>
    <property type="match status" value="1"/>
</dbReference>
<dbReference type="Pfam" id="PF00505">
    <property type="entry name" value="HMG_box"/>
    <property type="match status" value="1"/>
</dbReference>
<dbReference type="PIRSF" id="PIRSF037653">
    <property type="entry name" value="SRY"/>
    <property type="match status" value="1"/>
</dbReference>
<dbReference type="SMART" id="SM00398">
    <property type="entry name" value="HMG"/>
    <property type="match status" value="1"/>
</dbReference>
<dbReference type="SUPFAM" id="SSF47095">
    <property type="entry name" value="HMG-box"/>
    <property type="match status" value="1"/>
</dbReference>
<dbReference type="PROSITE" id="PS50118">
    <property type="entry name" value="HMG_BOX_2"/>
    <property type="match status" value="1"/>
</dbReference>
<protein>
    <recommendedName>
        <fullName>Sex-determining region Y protein</fullName>
    </recommendedName>
    <alternativeName>
        <fullName>Testis-determining factor</fullName>
    </alternativeName>
</protein>
<accession>Q6TC46</accession>
<name>SRY_EUMJU</name>
<gene>
    <name type="primary">SRY</name>
    <name type="synonym">TDF</name>
</gene>
<proteinExistence type="inferred from homology"/>